<sequence length="257" mass="27791">MRFDVVTLFPDMFGLVRDQGVTGRAHAQGLWALHAWNPRDFTHDVHRTVDDRPYGGGPGMVMMAAPLEAAVAAAQAARAAQGLQAAPVILLSPAGRRYDQAEATTLAAGTGAIFICGRYEGVDQRFIERCVTHELSLGDFVLSGGELAALAMMDAAVRLLPGVLNDGDSALQDSFNAALDGLLDSPHYTRPEVYEGVPVPQPLLSGHHANIARWRREQSLRLTASRRPELIERARGEGRLSKADERFLASLAGERES</sequence>
<proteinExistence type="inferred from homology"/>
<comment type="function">
    <text evidence="1">Specifically methylates guanosine-37 in various tRNAs.</text>
</comment>
<comment type="catalytic activity">
    <reaction evidence="1">
        <text>guanosine(37) in tRNA + S-adenosyl-L-methionine = N(1)-methylguanosine(37) in tRNA + S-adenosyl-L-homocysteine + H(+)</text>
        <dbReference type="Rhea" id="RHEA:36899"/>
        <dbReference type="Rhea" id="RHEA-COMP:10145"/>
        <dbReference type="Rhea" id="RHEA-COMP:10147"/>
        <dbReference type="ChEBI" id="CHEBI:15378"/>
        <dbReference type="ChEBI" id="CHEBI:57856"/>
        <dbReference type="ChEBI" id="CHEBI:59789"/>
        <dbReference type="ChEBI" id="CHEBI:73542"/>
        <dbReference type="ChEBI" id="CHEBI:74269"/>
        <dbReference type="EC" id="2.1.1.228"/>
    </reaction>
</comment>
<comment type="subunit">
    <text evidence="1">Homodimer.</text>
</comment>
<comment type="subcellular location">
    <subcellularLocation>
        <location evidence="1">Cytoplasm</location>
    </subcellularLocation>
</comment>
<comment type="similarity">
    <text evidence="1">Belongs to the RNA methyltransferase TrmD family.</text>
</comment>
<name>TRMD_BORPE</name>
<feature type="chain" id="PRO_0000060338" description="tRNA (guanine-N(1)-)-methyltransferase">
    <location>
        <begin position="1"/>
        <end position="257"/>
    </location>
</feature>
<feature type="binding site" evidence="1">
    <location>
        <position position="117"/>
    </location>
    <ligand>
        <name>S-adenosyl-L-methionine</name>
        <dbReference type="ChEBI" id="CHEBI:59789"/>
    </ligand>
</feature>
<feature type="binding site" evidence="1">
    <location>
        <begin position="137"/>
        <end position="142"/>
    </location>
    <ligand>
        <name>S-adenosyl-L-methionine</name>
        <dbReference type="ChEBI" id="CHEBI:59789"/>
    </ligand>
</feature>
<dbReference type="EC" id="2.1.1.228" evidence="1"/>
<dbReference type="EMBL" id="BX640416">
    <property type="protein sequence ID" value="CAE42127.1"/>
    <property type="molecule type" value="Genomic_DNA"/>
</dbReference>
<dbReference type="RefSeq" id="NP_880543.1">
    <property type="nucleotide sequence ID" value="NC_002929.2"/>
</dbReference>
<dbReference type="RefSeq" id="WP_003816734.1">
    <property type="nucleotide sequence ID" value="NZ_CP039022.1"/>
</dbReference>
<dbReference type="SMR" id="Q7U361"/>
<dbReference type="STRING" id="257313.BP1841"/>
<dbReference type="PaxDb" id="257313-BP1841"/>
<dbReference type="GeneID" id="69601986"/>
<dbReference type="KEGG" id="bpe:BP1841"/>
<dbReference type="PATRIC" id="fig|257313.5.peg.1978"/>
<dbReference type="eggNOG" id="COG0336">
    <property type="taxonomic scope" value="Bacteria"/>
</dbReference>
<dbReference type="HOGENOM" id="CLU_047363_0_1_4"/>
<dbReference type="Proteomes" id="UP000002676">
    <property type="component" value="Chromosome"/>
</dbReference>
<dbReference type="GO" id="GO:0005829">
    <property type="term" value="C:cytosol"/>
    <property type="evidence" value="ECO:0007669"/>
    <property type="project" value="TreeGrafter"/>
</dbReference>
<dbReference type="GO" id="GO:0052906">
    <property type="term" value="F:tRNA (guanine(37)-N1)-methyltransferase activity"/>
    <property type="evidence" value="ECO:0007669"/>
    <property type="project" value="UniProtKB-UniRule"/>
</dbReference>
<dbReference type="GO" id="GO:0002939">
    <property type="term" value="P:tRNA N1-guanine methylation"/>
    <property type="evidence" value="ECO:0007669"/>
    <property type="project" value="TreeGrafter"/>
</dbReference>
<dbReference type="CDD" id="cd18080">
    <property type="entry name" value="TrmD-like"/>
    <property type="match status" value="1"/>
</dbReference>
<dbReference type="FunFam" id="1.10.1270.20:FF:000001">
    <property type="entry name" value="tRNA (guanine-N(1)-)-methyltransferase"/>
    <property type="match status" value="1"/>
</dbReference>
<dbReference type="FunFam" id="3.40.1280.10:FF:000001">
    <property type="entry name" value="tRNA (guanine-N(1)-)-methyltransferase"/>
    <property type="match status" value="1"/>
</dbReference>
<dbReference type="Gene3D" id="3.40.1280.10">
    <property type="match status" value="1"/>
</dbReference>
<dbReference type="Gene3D" id="1.10.1270.20">
    <property type="entry name" value="tRNA(m1g37)methyltransferase, domain 2"/>
    <property type="match status" value="1"/>
</dbReference>
<dbReference type="HAMAP" id="MF_00605">
    <property type="entry name" value="TrmD"/>
    <property type="match status" value="1"/>
</dbReference>
<dbReference type="InterPro" id="IPR029028">
    <property type="entry name" value="Alpha/beta_knot_MTases"/>
</dbReference>
<dbReference type="InterPro" id="IPR023148">
    <property type="entry name" value="tRNA_m1G_MeTrfase_C_sf"/>
</dbReference>
<dbReference type="InterPro" id="IPR002649">
    <property type="entry name" value="tRNA_m1G_MeTrfase_TrmD"/>
</dbReference>
<dbReference type="InterPro" id="IPR029026">
    <property type="entry name" value="tRNA_m1G_MTases_N"/>
</dbReference>
<dbReference type="InterPro" id="IPR016009">
    <property type="entry name" value="tRNA_MeTrfase_TRMD/TRM10"/>
</dbReference>
<dbReference type="NCBIfam" id="NF000648">
    <property type="entry name" value="PRK00026.1"/>
    <property type="match status" value="1"/>
</dbReference>
<dbReference type="NCBIfam" id="TIGR00088">
    <property type="entry name" value="trmD"/>
    <property type="match status" value="1"/>
</dbReference>
<dbReference type="PANTHER" id="PTHR46417">
    <property type="entry name" value="TRNA (GUANINE-N(1)-)-METHYLTRANSFERASE"/>
    <property type="match status" value="1"/>
</dbReference>
<dbReference type="PANTHER" id="PTHR46417:SF1">
    <property type="entry name" value="TRNA (GUANINE-N(1)-)-METHYLTRANSFERASE"/>
    <property type="match status" value="1"/>
</dbReference>
<dbReference type="Pfam" id="PF01746">
    <property type="entry name" value="tRNA_m1G_MT"/>
    <property type="match status" value="1"/>
</dbReference>
<dbReference type="PIRSF" id="PIRSF000386">
    <property type="entry name" value="tRNA_mtase"/>
    <property type="match status" value="1"/>
</dbReference>
<dbReference type="SUPFAM" id="SSF75217">
    <property type="entry name" value="alpha/beta knot"/>
    <property type="match status" value="1"/>
</dbReference>
<protein>
    <recommendedName>
        <fullName evidence="1">tRNA (guanine-N(1)-)-methyltransferase</fullName>
        <ecNumber evidence="1">2.1.1.228</ecNumber>
    </recommendedName>
    <alternativeName>
        <fullName evidence="1">M1G-methyltransferase</fullName>
    </alternativeName>
    <alternativeName>
        <fullName evidence="1">tRNA [GM37] methyltransferase</fullName>
    </alternativeName>
</protein>
<evidence type="ECO:0000255" key="1">
    <source>
        <dbReference type="HAMAP-Rule" id="MF_00605"/>
    </source>
</evidence>
<gene>
    <name evidence="1" type="primary">trmD</name>
    <name type="ordered locus">BP1841</name>
</gene>
<keyword id="KW-0963">Cytoplasm</keyword>
<keyword id="KW-0489">Methyltransferase</keyword>
<keyword id="KW-1185">Reference proteome</keyword>
<keyword id="KW-0949">S-adenosyl-L-methionine</keyword>
<keyword id="KW-0808">Transferase</keyword>
<keyword id="KW-0819">tRNA processing</keyword>
<accession>Q7U361</accession>
<reference key="1">
    <citation type="journal article" date="2003" name="Nat. Genet.">
        <title>Comparative analysis of the genome sequences of Bordetella pertussis, Bordetella parapertussis and Bordetella bronchiseptica.</title>
        <authorList>
            <person name="Parkhill J."/>
            <person name="Sebaihia M."/>
            <person name="Preston A."/>
            <person name="Murphy L.D."/>
            <person name="Thomson N.R."/>
            <person name="Harris D.E."/>
            <person name="Holden M.T.G."/>
            <person name="Churcher C.M."/>
            <person name="Bentley S.D."/>
            <person name="Mungall K.L."/>
            <person name="Cerdeno-Tarraga A.-M."/>
            <person name="Temple L."/>
            <person name="James K.D."/>
            <person name="Harris B."/>
            <person name="Quail M.A."/>
            <person name="Achtman M."/>
            <person name="Atkin R."/>
            <person name="Baker S."/>
            <person name="Basham D."/>
            <person name="Bason N."/>
            <person name="Cherevach I."/>
            <person name="Chillingworth T."/>
            <person name="Collins M."/>
            <person name="Cronin A."/>
            <person name="Davis P."/>
            <person name="Doggett J."/>
            <person name="Feltwell T."/>
            <person name="Goble A."/>
            <person name="Hamlin N."/>
            <person name="Hauser H."/>
            <person name="Holroyd S."/>
            <person name="Jagels K."/>
            <person name="Leather S."/>
            <person name="Moule S."/>
            <person name="Norberczak H."/>
            <person name="O'Neil S."/>
            <person name="Ormond D."/>
            <person name="Price C."/>
            <person name="Rabbinowitsch E."/>
            <person name="Rutter S."/>
            <person name="Sanders M."/>
            <person name="Saunders D."/>
            <person name="Seeger K."/>
            <person name="Sharp S."/>
            <person name="Simmonds M."/>
            <person name="Skelton J."/>
            <person name="Squares R."/>
            <person name="Squares S."/>
            <person name="Stevens K."/>
            <person name="Unwin L."/>
            <person name="Whitehead S."/>
            <person name="Barrell B.G."/>
            <person name="Maskell D.J."/>
        </authorList>
    </citation>
    <scope>NUCLEOTIDE SEQUENCE [LARGE SCALE GENOMIC DNA]</scope>
    <source>
        <strain>Tohama I / ATCC BAA-589 / NCTC 13251</strain>
    </source>
</reference>
<organism>
    <name type="scientific">Bordetella pertussis (strain Tohama I / ATCC BAA-589 / NCTC 13251)</name>
    <dbReference type="NCBI Taxonomy" id="257313"/>
    <lineage>
        <taxon>Bacteria</taxon>
        <taxon>Pseudomonadati</taxon>
        <taxon>Pseudomonadota</taxon>
        <taxon>Betaproteobacteria</taxon>
        <taxon>Burkholderiales</taxon>
        <taxon>Alcaligenaceae</taxon>
        <taxon>Bordetella</taxon>
    </lineage>
</organism>